<accession>A0RTV6</accession>
<reference key="1">
    <citation type="journal article" date="2006" name="Proc. Natl. Acad. Sci. U.S.A.">
        <title>Genomic analysis of the uncultivated marine crenarchaeote Cenarchaeum symbiosum.</title>
        <authorList>
            <person name="Hallam S.J."/>
            <person name="Konstantinidis K.T."/>
            <person name="Putnam N."/>
            <person name="Schleper C."/>
            <person name="Watanabe Y."/>
            <person name="Sugahara J."/>
            <person name="Preston C."/>
            <person name="de la Torre J."/>
            <person name="Richardson P.M."/>
            <person name="DeLong E.F."/>
        </authorList>
    </citation>
    <scope>NUCLEOTIDE SEQUENCE [LARGE SCALE GENOMIC DNA]</scope>
    <source>
        <strain>A</strain>
    </source>
</reference>
<dbReference type="EC" id="2.7.1.161"/>
<dbReference type="EMBL" id="DP000238">
    <property type="protein sequence ID" value="ABK76773.1"/>
    <property type="molecule type" value="Genomic_DNA"/>
</dbReference>
<dbReference type="SMR" id="A0RTV6"/>
<dbReference type="STRING" id="414004.CENSYa_0128"/>
<dbReference type="EnsemblBacteria" id="ABK76773">
    <property type="protein sequence ID" value="ABK76773"/>
    <property type="gene ID" value="CENSYa_0128"/>
</dbReference>
<dbReference type="KEGG" id="csy:CENSYa_0128"/>
<dbReference type="PATRIC" id="fig|414004.10.peg.117"/>
<dbReference type="HOGENOM" id="CLU_088476_0_0_2"/>
<dbReference type="UniPathway" id="UPA00276">
    <property type="reaction ID" value="UER00929"/>
</dbReference>
<dbReference type="Proteomes" id="UP000000758">
    <property type="component" value="Chromosome"/>
</dbReference>
<dbReference type="GO" id="GO:0003700">
    <property type="term" value="F:DNA-binding transcription factor activity"/>
    <property type="evidence" value="ECO:0007669"/>
    <property type="project" value="InterPro"/>
</dbReference>
<dbReference type="GO" id="GO:0000287">
    <property type="term" value="F:magnesium ion binding"/>
    <property type="evidence" value="ECO:0007669"/>
    <property type="project" value="UniProtKB-UniRule"/>
</dbReference>
<dbReference type="GO" id="GO:0000166">
    <property type="term" value="F:nucleotide binding"/>
    <property type="evidence" value="ECO:0007669"/>
    <property type="project" value="UniProtKB-UniRule"/>
</dbReference>
<dbReference type="GO" id="GO:0008531">
    <property type="term" value="F:riboflavin kinase activity"/>
    <property type="evidence" value="ECO:0007669"/>
    <property type="project" value="InterPro"/>
</dbReference>
<dbReference type="GO" id="GO:0009398">
    <property type="term" value="P:FMN biosynthetic process"/>
    <property type="evidence" value="ECO:0007669"/>
    <property type="project" value="UniProtKB-UniRule"/>
</dbReference>
<dbReference type="GO" id="GO:0009231">
    <property type="term" value="P:riboflavin biosynthetic process"/>
    <property type="evidence" value="ECO:0007669"/>
    <property type="project" value="InterPro"/>
</dbReference>
<dbReference type="CDD" id="cd00090">
    <property type="entry name" value="HTH_ARSR"/>
    <property type="match status" value="1"/>
</dbReference>
<dbReference type="Gene3D" id="2.40.30.30">
    <property type="entry name" value="Riboflavin kinase-like"/>
    <property type="match status" value="1"/>
</dbReference>
<dbReference type="Gene3D" id="1.10.10.10">
    <property type="entry name" value="Winged helix-like DNA-binding domain superfamily/Winged helix DNA-binding domain"/>
    <property type="match status" value="1"/>
</dbReference>
<dbReference type="HAMAP" id="MF_01285">
    <property type="entry name" value="Riboflavin_kinase"/>
    <property type="match status" value="1"/>
</dbReference>
<dbReference type="InterPro" id="IPR011991">
    <property type="entry name" value="ArsR-like_HTH"/>
</dbReference>
<dbReference type="InterPro" id="IPR001845">
    <property type="entry name" value="HTH_ArsR_DNA-bd_dom"/>
</dbReference>
<dbReference type="InterPro" id="IPR039063">
    <property type="entry name" value="RibK_CTP-dep"/>
</dbReference>
<dbReference type="InterPro" id="IPR023470">
    <property type="entry name" value="Riboflavin_kinase_archaeal"/>
</dbReference>
<dbReference type="InterPro" id="IPR023602">
    <property type="entry name" value="Riboflavin_kinase_CTP-dep"/>
</dbReference>
<dbReference type="InterPro" id="IPR023465">
    <property type="entry name" value="Riboflavin_kinase_dom_sf"/>
</dbReference>
<dbReference type="InterPro" id="IPR036388">
    <property type="entry name" value="WH-like_DNA-bd_sf"/>
</dbReference>
<dbReference type="InterPro" id="IPR036390">
    <property type="entry name" value="WH_DNA-bd_sf"/>
</dbReference>
<dbReference type="PANTHER" id="PTHR40706">
    <property type="entry name" value="RIBOFLAVIN KINASE"/>
    <property type="match status" value="1"/>
</dbReference>
<dbReference type="PANTHER" id="PTHR40706:SF1">
    <property type="entry name" value="RIBOFLAVIN KINASE"/>
    <property type="match status" value="1"/>
</dbReference>
<dbReference type="Pfam" id="PF01982">
    <property type="entry name" value="CTP-dep_RFKase"/>
    <property type="match status" value="1"/>
</dbReference>
<dbReference type="SUPFAM" id="SSF82114">
    <property type="entry name" value="Riboflavin kinase-like"/>
    <property type="match status" value="1"/>
</dbReference>
<dbReference type="SUPFAM" id="SSF46785">
    <property type="entry name" value="Winged helix' DNA-binding domain"/>
    <property type="match status" value="1"/>
</dbReference>
<dbReference type="PROSITE" id="PS50987">
    <property type="entry name" value="HTH_ARSR_2"/>
    <property type="match status" value="1"/>
</dbReference>
<comment type="function">
    <text evidence="1">Catalyzes the CTP-dependent phosphorylation of riboflavin (vitamin B2) to form flavin mononucleotide (FMN).</text>
</comment>
<comment type="catalytic activity">
    <reaction>
        <text>riboflavin + CTP = CDP + FMN + H(+)</text>
        <dbReference type="Rhea" id="RHEA:25021"/>
        <dbReference type="ChEBI" id="CHEBI:15378"/>
        <dbReference type="ChEBI" id="CHEBI:37563"/>
        <dbReference type="ChEBI" id="CHEBI:57986"/>
        <dbReference type="ChEBI" id="CHEBI:58069"/>
        <dbReference type="ChEBI" id="CHEBI:58210"/>
        <dbReference type="EC" id="2.7.1.161"/>
    </reaction>
</comment>
<comment type="cofactor">
    <cofactor evidence="1">
        <name>Mg(2+)</name>
        <dbReference type="ChEBI" id="CHEBI:18420"/>
    </cofactor>
    <text evidence="1">Binds 1 Mg(2+) ion per subunit.</text>
</comment>
<comment type="pathway">
    <text>Cofactor biosynthesis; FMN biosynthesis; FMN from riboflavin (CTP route): step 1/1.</text>
</comment>
<comment type="similarity">
    <text evidence="2">Belongs to the archaeal riboflavin kinase family.</text>
</comment>
<sequence>MGISQQAASQHLRELEDEGLITRNAEGKGISVMVTDKGRHELLRVYNILHDSLHSRPDHVEITGTLVSGMNEGAYYMSREGYTGQFQERLGYVPFPGTLNVDTDRKHGPEIARLDGMNGTIIDGFTDGKRSYGWVKCFAGTLNGTIPCHLIRLERTHHGSSTVELISKLDIRKETGLDDGGKITIRIPLEQED</sequence>
<feature type="chain" id="PRO_0000322083" description="Riboflavin kinase">
    <location>
        <begin position="1"/>
        <end position="193"/>
    </location>
</feature>
<feature type="region of interest" description="H-T-H motif-like">
    <location>
        <begin position="1"/>
        <end position="59"/>
    </location>
</feature>
<feature type="region of interest" description="Riboflavin kinase">
    <location>
        <begin position="60"/>
        <end position="193"/>
    </location>
</feature>
<feature type="binding site" evidence="1">
    <location>
        <begin position="69"/>
        <end position="74"/>
    </location>
    <ligand>
        <name>CDP</name>
        <dbReference type="ChEBI" id="CHEBI:58069"/>
    </ligand>
</feature>
<feature type="binding site" evidence="1">
    <location>
        <position position="98"/>
    </location>
    <ligand>
        <name>Mg(2+)</name>
        <dbReference type="ChEBI" id="CHEBI:18420"/>
    </ligand>
</feature>
<feature type="binding site" evidence="1">
    <location>
        <position position="100"/>
    </location>
    <ligand>
        <name>Mg(2+)</name>
        <dbReference type="ChEBI" id="CHEBI:18420"/>
    </ligand>
</feature>
<feature type="binding site" evidence="1">
    <location>
        <position position="156"/>
    </location>
    <ligand>
        <name>FMN</name>
        <dbReference type="ChEBI" id="CHEBI:58210"/>
    </ligand>
</feature>
<feature type="binding site" evidence="1">
    <location>
        <position position="164"/>
    </location>
    <ligand>
        <name>FMN</name>
        <dbReference type="ChEBI" id="CHEBI:58210"/>
    </ligand>
</feature>
<feature type="binding site" evidence="1">
    <location>
        <begin position="169"/>
        <end position="172"/>
    </location>
    <ligand>
        <name>CDP</name>
        <dbReference type="ChEBI" id="CHEBI:58069"/>
    </ligand>
</feature>
<organism>
    <name type="scientific">Cenarchaeum symbiosum (strain A)</name>
    <dbReference type="NCBI Taxonomy" id="414004"/>
    <lineage>
        <taxon>Archaea</taxon>
        <taxon>Nitrososphaerota</taxon>
        <taxon>Candidatus Cenarchaeales</taxon>
        <taxon>Candidatus Cenarchaeaceae</taxon>
        <taxon>Candidatus Cenarchaeum</taxon>
    </lineage>
</organism>
<protein>
    <recommendedName>
        <fullName>Riboflavin kinase</fullName>
        <shortName>RFK</shortName>
        <ecNumber>2.7.1.161</ecNumber>
    </recommendedName>
    <alternativeName>
        <fullName>CTP-dependent riboflavin kinase</fullName>
    </alternativeName>
    <alternativeName>
        <fullName>CTP:riboflavin 5'-phosphotransferase</fullName>
    </alternativeName>
    <alternativeName>
        <fullName>Flavokinase</fullName>
    </alternativeName>
</protein>
<evidence type="ECO:0000250" key="1"/>
<evidence type="ECO:0000305" key="2"/>
<proteinExistence type="inferred from homology"/>
<gene>
    <name type="primary">ribK</name>
    <name type="ordered locus">CENSYa_0128</name>
</gene>
<name>RIFK_CENSY</name>
<keyword id="KW-0285">Flavoprotein</keyword>
<keyword id="KW-0288">FMN</keyword>
<keyword id="KW-0418">Kinase</keyword>
<keyword id="KW-0460">Magnesium</keyword>
<keyword id="KW-0479">Metal-binding</keyword>
<keyword id="KW-0547">Nucleotide-binding</keyword>
<keyword id="KW-1185">Reference proteome</keyword>
<keyword id="KW-0808">Transferase</keyword>